<keyword id="KW-0963">Cytoplasm</keyword>
<keyword id="KW-0285">Flavoprotein</keyword>
<keyword id="KW-0288">FMN</keyword>
<keyword id="KW-0520">NAD</keyword>
<keyword id="KW-0560">Oxidoreductase</keyword>
<keyword id="KW-0665">Pyrimidine biosynthesis</keyword>
<keyword id="KW-1185">Reference proteome</keyword>
<comment type="function">
    <text evidence="1">Catalyzes the conversion of dihydroorotate to orotate with NAD(+) as electron acceptor.</text>
</comment>
<comment type="catalytic activity">
    <reaction>
        <text>(S)-dihydroorotate + NAD(+) = orotate + NADH + H(+)</text>
        <dbReference type="Rhea" id="RHEA:13513"/>
        <dbReference type="ChEBI" id="CHEBI:15378"/>
        <dbReference type="ChEBI" id="CHEBI:30839"/>
        <dbReference type="ChEBI" id="CHEBI:30864"/>
        <dbReference type="ChEBI" id="CHEBI:57540"/>
        <dbReference type="ChEBI" id="CHEBI:57945"/>
        <dbReference type="EC" id="1.3.1.14"/>
    </reaction>
</comment>
<comment type="cofactor">
    <cofactor evidence="1">
        <name>FMN</name>
        <dbReference type="ChEBI" id="CHEBI:58210"/>
    </cofactor>
    <text evidence="1">Binds 1 FMN per subunit.</text>
</comment>
<comment type="pathway">
    <text>Pyrimidine metabolism; UMP biosynthesis via de novo pathway; orotate from (S)-dihydroorotate (NAD(+) route): step 1/1.</text>
</comment>
<comment type="subunit">
    <text evidence="1">Heterotetramer of 2 PyrK and 2 PyrD type B subunits.</text>
</comment>
<comment type="subcellular location">
    <subcellularLocation>
        <location evidence="1">Cytoplasm</location>
    </subcellularLocation>
</comment>
<comment type="similarity">
    <text evidence="2">Belongs to the dihydroorotate dehydrogenase family. Type 1 subfamily.</text>
</comment>
<organism>
    <name type="scientific">Thermodesulfovibrio yellowstonii (strain ATCC 51303 / DSM 11347 / YP87)</name>
    <dbReference type="NCBI Taxonomy" id="289376"/>
    <lineage>
        <taxon>Bacteria</taxon>
        <taxon>Pseudomonadati</taxon>
        <taxon>Nitrospirota</taxon>
        <taxon>Thermodesulfovibrionia</taxon>
        <taxon>Thermodesulfovibrionales</taxon>
        <taxon>Thermodesulfovibrionaceae</taxon>
        <taxon>Thermodesulfovibrio</taxon>
    </lineage>
</organism>
<gene>
    <name type="primary">pyrD</name>
    <name type="ordered locus">THEYE_A0543</name>
</gene>
<sequence>MPVLEVKIGNLSFKNPVLTASGTFGYGLEYSQFVDLNILGGIVVKGLSLKPKQGNPPPRIYETPCGMINSIGLQNIGLEAFKKEKLPFLKKFNTNIIVNFFGENLDEYIEVAKLLDETEGVHALEMNVSCPNKTSEWRKMGLEPELLREAIKRVRLHIKKPLIVKLAPQVTEIALMARICEEEGADAVSLINTIPAMVIDIKTRKSMIGTLTGGLSGPAIRPVALRAVWEVAQAVKIPVIGVGGIVSAEDALQFLIAGAKAIQVGTANFINPIATVEIIEGIKQFLIEENIKDINEIIGSFKE</sequence>
<reference key="1">
    <citation type="submission" date="2008-08" db="EMBL/GenBank/DDBJ databases">
        <title>The complete genome sequence of Thermodesulfovibrio yellowstonii strain ATCC 51303 / DSM 11347 / YP87.</title>
        <authorList>
            <person name="Dodson R.J."/>
            <person name="Durkin A.S."/>
            <person name="Wu M."/>
            <person name="Eisen J."/>
            <person name="Sutton G."/>
        </authorList>
    </citation>
    <scope>NUCLEOTIDE SEQUENCE [LARGE SCALE GENOMIC DNA]</scope>
    <source>
        <strain>ATCC 51303 / DSM 11347 / YP87</strain>
    </source>
</reference>
<protein>
    <recommendedName>
        <fullName>Dihydroorotate dehydrogenase B (NAD(+)), catalytic subunit</fullName>
        <shortName>DHOD B</shortName>
        <shortName>DHODase B</shortName>
        <shortName>DHOdehase B</shortName>
        <ecNumber>1.3.1.14</ecNumber>
    </recommendedName>
    <alternativeName>
        <fullName>Dihydroorotate oxidase B</fullName>
    </alternativeName>
    <alternativeName>
        <fullName>Orotate reductase (NADH)</fullName>
    </alternativeName>
</protein>
<accession>B5YJH1</accession>
<dbReference type="EC" id="1.3.1.14"/>
<dbReference type="EMBL" id="CP001147">
    <property type="protein sequence ID" value="ACI20942.1"/>
    <property type="molecule type" value="Genomic_DNA"/>
</dbReference>
<dbReference type="RefSeq" id="YP_002248386.1">
    <property type="nucleotide sequence ID" value="NC_011296.1"/>
</dbReference>
<dbReference type="SMR" id="B5YJH1"/>
<dbReference type="FunCoup" id="B5YJH1">
    <property type="interactions" value="173"/>
</dbReference>
<dbReference type="STRING" id="289376.THEYE_A0543"/>
<dbReference type="EnsemblBacteria" id="ACI20942">
    <property type="protein sequence ID" value="ACI20942"/>
    <property type="gene ID" value="THEYE_A0543"/>
</dbReference>
<dbReference type="KEGG" id="tye:THEYE_A0543"/>
<dbReference type="PATRIC" id="fig|289376.4.peg.537"/>
<dbReference type="eggNOG" id="COG0167">
    <property type="taxonomic scope" value="Bacteria"/>
</dbReference>
<dbReference type="HOGENOM" id="CLU_042042_0_0_0"/>
<dbReference type="InParanoid" id="B5YJH1"/>
<dbReference type="OrthoDB" id="9794954at2"/>
<dbReference type="UniPathway" id="UPA00070">
    <property type="reaction ID" value="UER00945"/>
</dbReference>
<dbReference type="Proteomes" id="UP000000718">
    <property type="component" value="Chromosome"/>
</dbReference>
<dbReference type="GO" id="GO:0005737">
    <property type="term" value="C:cytoplasm"/>
    <property type="evidence" value="ECO:0000318"/>
    <property type="project" value="GO_Central"/>
</dbReference>
<dbReference type="GO" id="GO:0004589">
    <property type="term" value="F:dihydroorotate dehydrogenase (NAD+) activity"/>
    <property type="evidence" value="ECO:0007669"/>
    <property type="project" value="UniProtKB-EC"/>
</dbReference>
<dbReference type="GO" id="GO:0004152">
    <property type="term" value="F:dihydroorotate dehydrogenase activity"/>
    <property type="evidence" value="ECO:0000318"/>
    <property type="project" value="GO_Central"/>
</dbReference>
<dbReference type="GO" id="GO:0006207">
    <property type="term" value="P:'de novo' pyrimidine nucleobase biosynthetic process"/>
    <property type="evidence" value="ECO:0000318"/>
    <property type="project" value="GO_Central"/>
</dbReference>
<dbReference type="GO" id="GO:0044205">
    <property type="term" value="P:'de novo' UMP biosynthetic process"/>
    <property type="evidence" value="ECO:0007669"/>
    <property type="project" value="UniProtKB-UniRule"/>
</dbReference>
<dbReference type="CDD" id="cd04740">
    <property type="entry name" value="DHOD_1B_like"/>
    <property type="match status" value="1"/>
</dbReference>
<dbReference type="FunFam" id="3.20.20.70:FF:000027">
    <property type="entry name" value="Dihydropyrimidine dehydrogenase [NADP(+)]"/>
    <property type="match status" value="1"/>
</dbReference>
<dbReference type="Gene3D" id="3.20.20.70">
    <property type="entry name" value="Aldolase class I"/>
    <property type="match status" value="1"/>
</dbReference>
<dbReference type="HAMAP" id="MF_00224">
    <property type="entry name" value="DHO_dh_type1"/>
    <property type="match status" value="1"/>
</dbReference>
<dbReference type="InterPro" id="IPR013785">
    <property type="entry name" value="Aldolase_TIM"/>
</dbReference>
<dbReference type="InterPro" id="IPR050074">
    <property type="entry name" value="DHO_dehydrogenase"/>
</dbReference>
<dbReference type="InterPro" id="IPR033888">
    <property type="entry name" value="DHOD_1B"/>
</dbReference>
<dbReference type="InterPro" id="IPR024920">
    <property type="entry name" value="Dihydroorotate_DH_1"/>
</dbReference>
<dbReference type="InterPro" id="IPR012135">
    <property type="entry name" value="Dihydroorotate_DH_1_2"/>
</dbReference>
<dbReference type="InterPro" id="IPR005720">
    <property type="entry name" value="Dihydroorotate_DH_cat"/>
</dbReference>
<dbReference type="InterPro" id="IPR001295">
    <property type="entry name" value="Dihydroorotate_DH_CS"/>
</dbReference>
<dbReference type="InterPro" id="IPR049622">
    <property type="entry name" value="Dihydroorotate_DH_I"/>
</dbReference>
<dbReference type="NCBIfam" id="NF005574">
    <property type="entry name" value="PRK07259.1"/>
    <property type="match status" value="1"/>
</dbReference>
<dbReference type="NCBIfam" id="TIGR01037">
    <property type="entry name" value="pyrD_sub1_fam"/>
    <property type="match status" value="1"/>
</dbReference>
<dbReference type="PANTHER" id="PTHR48109:SF1">
    <property type="entry name" value="DIHYDROOROTATE DEHYDROGENASE (FUMARATE)"/>
    <property type="match status" value="1"/>
</dbReference>
<dbReference type="PANTHER" id="PTHR48109">
    <property type="entry name" value="DIHYDROOROTATE DEHYDROGENASE (QUINONE), MITOCHONDRIAL-RELATED"/>
    <property type="match status" value="1"/>
</dbReference>
<dbReference type="Pfam" id="PF01180">
    <property type="entry name" value="DHO_dh"/>
    <property type="match status" value="1"/>
</dbReference>
<dbReference type="PIRSF" id="PIRSF000164">
    <property type="entry name" value="DHO_oxidase"/>
    <property type="match status" value="1"/>
</dbReference>
<dbReference type="SUPFAM" id="SSF51395">
    <property type="entry name" value="FMN-linked oxidoreductases"/>
    <property type="match status" value="1"/>
</dbReference>
<dbReference type="PROSITE" id="PS00911">
    <property type="entry name" value="DHODEHASE_1"/>
    <property type="match status" value="1"/>
</dbReference>
<dbReference type="PROSITE" id="PS00912">
    <property type="entry name" value="DHODEHASE_2"/>
    <property type="match status" value="1"/>
</dbReference>
<feature type="chain" id="PRO_1000100237" description="Dihydroorotate dehydrogenase B (NAD(+)), catalytic subunit">
    <location>
        <begin position="1"/>
        <end position="303"/>
    </location>
</feature>
<feature type="active site" description="Nucleophile">
    <location>
        <position position="130"/>
    </location>
</feature>
<feature type="binding site" evidence="1">
    <location>
        <position position="21"/>
    </location>
    <ligand>
        <name>FMN</name>
        <dbReference type="ChEBI" id="CHEBI:58210"/>
    </ligand>
</feature>
<feature type="binding site" evidence="1">
    <location>
        <begin position="45"/>
        <end position="46"/>
    </location>
    <ligand>
        <name>FMN</name>
        <dbReference type="ChEBI" id="CHEBI:58210"/>
    </ligand>
</feature>
<feature type="binding site" evidence="1">
    <location>
        <position position="45"/>
    </location>
    <ligand>
        <name>substrate</name>
    </ligand>
</feature>
<feature type="binding site" evidence="1">
    <location>
        <begin position="69"/>
        <end position="73"/>
    </location>
    <ligand>
        <name>substrate</name>
    </ligand>
</feature>
<feature type="binding site" evidence="1">
    <location>
        <position position="99"/>
    </location>
    <ligand>
        <name>FMN</name>
        <dbReference type="ChEBI" id="CHEBI:58210"/>
    </ligand>
</feature>
<feature type="binding site" evidence="1">
    <location>
        <position position="127"/>
    </location>
    <ligand>
        <name>FMN</name>
        <dbReference type="ChEBI" id="CHEBI:58210"/>
    </ligand>
</feature>
<feature type="binding site" evidence="1">
    <location>
        <position position="127"/>
    </location>
    <ligand>
        <name>substrate</name>
    </ligand>
</feature>
<feature type="binding site" evidence="1">
    <location>
        <position position="165"/>
    </location>
    <ligand>
        <name>FMN</name>
        <dbReference type="ChEBI" id="CHEBI:58210"/>
    </ligand>
</feature>
<feature type="binding site" evidence="1">
    <location>
        <position position="191"/>
    </location>
    <ligand>
        <name>FMN</name>
        <dbReference type="ChEBI" id="CHEBI:58210"/>
    </ligand>
</feature>
<feature type="binding site" evidence="1">
    <location>
        <begin position="192"/>
        <end position="193"/>
    </location>
    <ligand>
        <name>substrate</name>
    </ligand>
</feature>
<feature type="binding site" evidence="1">
    <location>
        <position position="217"/>
    </location>
    <ligand>
        <name>FMN</name>
        <dbReference type="ChEBI" id="CHEBI:58210"/>
    </ligand>
</feature>
<feature type="binding site" evidence="1">
    <location>
        <begin position="243"/>
        <end position="244"/>
    </location>
    <ligand>
        <name>FMN</name>
        <dbReference type="ChEBI" id="CHEBI:58210"/>
    </ligand>
</feature>
<feature type="binding site" evidence="1">
    <location>
        <begin position="265"/>
        <end position="266"/>
    </location>
    <ligand>
        <name>FMN</name>
        <dbReference type="ChEBI" id="CHEBI:58210"/>
    </ligand>
</feature>
<name>PYRDB_THEYD</name>
<proteinExistence type="inferred from homology"/>
<evidence type="ECO:0000250" key="1"/>
<evidence type="ECO:0000305" key="2"/>